<accession>Q90YM8</accession>
<accession>Q58ES3</accession>
<gene>
    <name evidence="7" type="primary">cyfip1</name>
</gene>
<name>CYFP1_DANRE</name>
<evidence type="ECO:0000250" key="1">
    <source>
        <dbReference type="UniProtKB" id="Q7L576"/>
    </source>
</evidence>
<evidence type="ECO:0000250" key="2">
    <source>
        <dbReference type="UniProtKB" id="Q7TMB8"/>
    </source>
</evidence>
<evidence type="ECO:0000255" key="3"/>
<evidence type="ECO:0000305" key="4"/>
<evidence type="ECO:0000312" key="5">
    <source>
        <dbReference type="EMBL" id="AAG61253.1"/>
    </source>
</evidence>
<evidence type="ECO:0000312" key="6">
    <source>
        <dbReference type="EMBL" id="AAH91781.1"/>
    </source>
</evidence>
<evidence type="ECO:0000312" key="7">
    <source>
        <dbReference type="ZFIN" id="ZDB-GENE-030131-8557"/>
    </source>
</evidence>
<keyword id="KW-0009">Actin-binding</keyword>
<keyword id="KW-0966">Cell projection</keyword>
<keyword id="KW-0133">Cell shape</keyword>
<keyword id="KW-0963">Cytoplasm</keyword>
<keyword id="KW-0217">Developmental protein</keyword>
<keyword id="KW-0221">Differentiation</keyword>
<keyword id="KW-0524">Neurogenesis</keyword>
<keyword id="KW-1185">Reference proteome</keyword>
<keyword id="KW-0770">Synapse</keyword>
<keyword id="KW-0771">Synaptosome</keyword>
<dbReference type="EMBL" id="AY017342">
    <property type="protein sequence ID" value="AAG61253.1"/>
    <property type="molecule type" value="mRNA"/>
</dbReference>
<dbReference type="EMBL" id="BC091781">
    <property type="protein sequence ID" value="AAH91781.1"/>
    <property type="molecule type" value="mRNA"/>
</dbReference>
<dbReference type="RefSeq" id="NP_997924.1">
    <property type="nucleotide sequence ID" value="NM_212759.1"/>
</dbReference>
<dbReference type="SMR" id="Q90YM8"/>
<dbReference type="FunCoup" id="Q90YM8">
    <property type="interactions" value="1906"/>
</dbReference>
<dbReference type="STRING" id="7955.ENSDARP00000065126"/>
<dbReference type="PaxDb" id="7955-ENSDARP00000095008"/>
<dbReference type="GeneID" id="336613"/>
<dbReference type="KEGG" id="dre:336613"/>
<dbReference type="AGR" id="ZFIN:ZDB-GENE-030131-8557"/>
<dbReference type="CTD" id="23191"/>
<dbReference type="ZFIN" id="ZDB-GENE-030131-8557">
    <property type="gene designation" value="cyfip1"/>
</dbReference>
<dbReference type="eggNOG" id="KOG3534">
    <property type="taxonomic scope" value="Eukaryota"/>
</dbReference>
<dbReference type="InParanoid" id="Q90YM8"/>
<dbReference type="OrthoDB" id="10265867at2759"/>
<dbReference type="PhylomeDB" id="Q90YM8"/>
<dbReference type="Reactome" id="R-DRE-6798695">
    <property type="pathway name" value="Neutrophil degranulation"/>
</dbReference>
<dbReference type="Reactome" id="R-DRE-9013408">
    <property type="pathway name" value="RHOG GTPase cycle"/>
</dbReference>
<dbReference type="PRO" id="PR:Q90YM8"/>
<dbReference type="Proteomes" id="UP000000437">
    <property type="component" value="Chromosome 6"/>
</dbReference>
<dbReference type="GO" id="GO:0005737">
    <property type="term" value="C:cytoplasm"/>
    <property type="evidence" value="ECO:0000250"/>
    <property type="project" value="ZFIN"/>
</dbReference>
<dbReference type="GO" id="GO:0030027">
    <property type="term" value="C:lamellipodium"/>
    <property type="evidence" value="ECO:0007669"/>
    <property type="project" value="UniProtKB-SubCell"/>
</dbReference>
<dbReference type="GO" id="GO:0043005">
    <property type="term" value="C:neuron projection"/>
    <property type="evidence" value="ECO:0000318"/>
    <property type="project" value="GO_Central"/>
</dbReference>
<dbReference type="GO" id="GO:0048471">
    <property type="term" value="C:perinuclear region of cytoplasm"/>
    <property type="evidence" value="ECO:0007669"/>
    <property type="project" value="UniProtKB-SubCell"/>
</dbReference>
<dbReference type="GO" id="GO:0001726">
    <property type="term" value="C:ruffle"/>
    <property type="evidence" value="ECO:0007669"/>
    <property type="project" value="UniProtKB-SubCell"/>
</dbReference>
<dbReference type="GO" id="GO:0031209">
    <property type="term" value="C:SCAR complex"/>
    <property type="evidence" value="ECO:0000318"/>
    <property type="project" value="GO_Central"/>
</dbReference>
<dbReference type="GO" id="GO:0045202">
    <property type="term" value="C:synapse"/>
    <property type="evidence" value="ECO:0000318"/>
    <property type="project" value="GO_Central"/>
</dbReference>
<dbReference type="GO" id="GO:0051015">
    <property type="term" value="F:actin filament binding"/>
    <property type="evidence" value="ECO:0000250"/>
    <property type="project" value="UniProtKB"/>
</dbReference>
<dbReference type="GO" id="GO:0000340">
    <property type="term" value="F:RNA 7-methylguanosine cap binding"/>
    <property type="evidence" value="ECO:0000318"/>
    <property type="project" value="GO_Central"/>
</dbReference>
<dbReference type="GO" id="GO:0031267">
    <property type="term" value="F:small GTPase binding"/>
    <property type="evidence" value="ECO:0007669"/>
    <property type="project" value="InterPro"/>
</dbReference>
<dbReference type="GO" id="GO:0030371">
    <property type="term" value="F:translation repressor activity"/>
    <property type="evidence" value="ECO:0000250"/>
    <property type="project" value="UniProtKB"/>
</dbReference>
<dbReference type="GO" id="GO:0048675">
    <property type="term" value="P:axon extension"/>
    <property type="evidence" value="ECO:0000250"/>
    <property type="project" value="UniProtKB"/>
</dbReference>
<dbReference type="GO" id="GO:0007411">
    <property type="term" value="P:axon guidance"/>
    <property type="evidence" value="ECO:0000318"/>
    <property type="project" value="GO_Central"/>
</dbReference>
<dbReference type="GO" id="GO:0000902">
    <property type="term" value="P:cell morphogenesis"/>
    <property type="evidence" value="ECO:0000318"/>
    <property type="project" value="GO_Central"/>
</dbReference>
<dbReference type="GO" id="GO:0030032">
    <property type="term" value="P:lamellipodium assembly"/>
    <property type="evidence" value="ECO:0000250"/>
    <property type="project" value="UniProtKB"/>
</dbReference>
<dbReference type="GO" id="GO:0030833">
    <property type="term" value="P:regulation of actin filament polymerization"/>
    <property type="evidence" value="ECO:0007669"/>
    <property type="project" value="InterPro"/>
</dbReference>
<dbReference type="GO" id="GO:0008360">
    <property type="term" value="P:regulation of cell shape"/>
    <property type="evidence" value="ECO:0007669"/>
    <property type="project" value="UniProtKB-KW"/>
</dbReference>
<dbReference type="GO" id="GO:0006417">
    <property type="term" value="P:regulation of translation"/>
    <property type="evidence" value="ECO:0000318"/>
    <property type="project" value="GO_Central"/>
</dbReference>
<dbReference type="GO" id="GO:0031529">
    <property type="term" value="P:ruffle organization"/>
    <property type="evidence" value="ECO:0000250"/>
    <property type="project" value="UniProtKB"/>
</dbReference>
<dbReference type="InterPro" id="IPR009828">
    <property type="entry name" value="CYRIA/CYRIB_Rac1-bd"/>
</dbReference>
<dbReference type="InterPro" id="IPR008081">
    <property type="entry name" value="Cytoplasmic_FMR1-int"/>
</dbReference>
<dbReference type="PANTHER" id="PTHR12195">
    <property type="entry name" value="CYTOPLASMIC FMR1-INTERACTING PROTEIN-RELATED"/>
    <property type="match status" value="1"/>
</dbReference>
<dbReference type="Pfam" id="PF07159">
    <property type="entry name" value="CYRIA-B_Rac1-bd"/>
    <property type="match status" value="1"/>
</dbReference>
<dbReference type="Pfam" id="PF05994">
    <property type="entry name" value="FragX_IP"/>
    <property type="match status" value="1"/>
</dbReference>
<dbReference type="PIRSF" id="PIRSF008153">
    <property type="entry name" value="FMR1_interacting"/>
    <property type="match status" value="1"/>
</dbReference>
<dbReference type="PRINTS" id="PR01698">
    <property type="entry name" value="CYTOFMRPINTP"/>
</dbReference>
<sequence length="1253" mass="145174">MASTVTLEDALSNVDLLEELPLPDQQPCIEPLPSSLIYQPNFNTNFEDRNAFVTGIARYIEQATVHSSMNDMLEEGQQYAVMLYTWRCCSRAIPQVKCNEQPNRVEIYEKTVEVLEPEVNKLMNFMYFQRTAIDRFCGEVRRLCHAERRKDFVSEAYLLTLGKFINMFAVLDELKNMKCSVKNDHSAYKRAAQFLRKMSEPSSIQESQNLSMFLANHNKITQSLQQQLEVINGYDELLADIVNLCVDYYENKMYLTPSERHMLLKVMGFGLYLMDGSNSNIYKLEAKKRINLTKIDKFFKQLQVVPLFGDMQIELARYIKTSAHYEENKSRWSCTSTGSSPQYNVCEQMIQIREGHMRFISELARYSNSEVVTGSGRQDAQKTDSEYRKLFDLALQGLQLLSQWSAQIMEVYSWKLVHPTDKYSNKECPDNAEEYERATRYNYTSEEKFALVEVLAMIKGLQVLMGRMESVFNHAIRHTIYSALQDFAQVTLREPLRQAIKKKKNVVQSVLQAIRKTVCDWETGREPHNDPALRGEKDPKGGFDIKVPRRAVGPSSTQLYMVRTMLESLVADKSGSKKTLRSSLEGPTILDIEKFHRESFFYTHLLNFSETLQQCCDLSQLWFREFFLELTMGRRIQFPIEMSMPWILTDHILETKEASMMEYVLYSLDLYNDSAHYALTKFKKQFLYDEIEAEVNLCFDQFVYKLADQIFAYYKVIAGSLLLDKRLRAECKNQGANISWPSSNRYETLLKQRHVQLLGRSIDLNRLITQRVSSALYKSLELAISRFESEDLTSIMELEGLLDINRMTHKLLSKYLTLDSIDAMFREANHNVSAPYGRITLHVFWELNYDFLPNYCYNGSTNRFVRTILPFSQEFQRDKPPNAQPQYLYGSKALNLAYSSIYSLYRNFVGPPHIKAICRLLGYQGIAVVMEELLKVVKSLLQGTILQYVKTLMEVMPKICRLPRHEYGSPGILEFFHHQLKDIVEYAELKSVCFQNLREVGNALLFCLLTEQSLSQEEVCDLLHAAPFQNILPRVHVKEGERLDAKMKRLEAKYTALHLVPLIERLGTPQQIAIAREGDLLTKERLCCGLSIFEVILTRVRAYLDDPIWRGPLPSNGVMHVDECVEFHRLWSAMQFVYCIPVGAHEFTVEQCFGDGLNWAGCMIITLLGQHRRFDILDFSYHLLKVQKHDGKDEIIKSVPLKKMVDRIRKFQILNDEIFAILNKYLKSGDGENMPVEHVRCFQPPIHQSLASN</sequence>
<protein>
    <recommendedName>
        <fullName>Cytoplasmic FMR1-interacting protein 1 homolog</fullName>
    </recommendedName>
</protein>
<feature type="chain" id="PRO_0000279708" description="Cytoplasmic FMR1-interacting protein 1 homolog">
    <location>
        <begin position="1"/>
        <end position="1253"/>
    </location>
</feature>
<feature type="sequence conflict" description="In Ref. 2; AAH91781." evidence="4" ref="2">
    <original>R</original>
    <variation>K</variation>
    <location>
        <position position="260"/>
    </location>
</feature>
<feature type="sequence conflict" description="In Ref. 2; AAH91781." evidence="4" ref="2">
    <original>A</original>
    <variation>T</variation>
    <location>
        <position position="323"/>
    </location>
</feature>
<feature type="sequence conflict" description="In Ref. 2; AAH91781." evidence="4" ref="2">
    <original>T</original>
    <variation>A</variation>
    <location>
        <position position="337"/>
    </location>
</feature>
<feature type="sequence conflict" description="In Ref. 2; AAH91781." evidence="4" ref="2">
    <original>G</original>
    <variation>D</variation>
    <location>
        <position position="355"/>
    </location>
</feature>
<feature type="sequence conflict" description="In Ref. 2; AAH91781." evidence="4" ref="2">
    <original>NVVQSV</original>
    <variation>KKKKKK</variation>
    <location>
        <begin position="505"/>
        <end position="510"/>
    </location>
</feature>
<organism>
    <name type="scientific">Danio rerio</name>
    <name type="common">Zebrafish</name>
    <name type="synonym">Brachydanio rerio</name>
    <dbReference type="NCBI Taxonomy" id="7955"/>
    <lineage>
        <taxon>Eukaryota</taxon>
        <taxon>Metazoa</taxon>
        <taxon>Chordata</taxon>
        <taxon>Craniata</taxon>
        <taxon>Vertebrata</taxon>
        <taxon>Euteleostomi</taxon>
        <taxon>Actinopterygii</taxon>
        <taxon>Neopterygii</taxon>
        <taxon>Teleostei</taxon>
        <taxon>Ostariophysi</taxon>
        <taxon>Cypriniformes</taxon>
        <taxon>Danionidae</taxon>
        <taxon>Danioninae</taxon>
        <taxon>Danio</taxon>
    </lineage>
</organism>
<proteinExistence type="evidence at transcript level"/>
<comment type="function">
    <text evidence="1 2">Involved in formation of membrane ruffles and lamellipodia protrusions and in axon outgrowth. Binds to F-actin but not to RNA (By similarity).</text>
</comment>
<comment type="subcellular location">
    <subcellularLocation>
        <location evidence="2">Cytoplasm</location>
    </subcellularLocation>
    <subcellularLocation>
        <location evidence="2">Cytoplasm</location>
        <location evidence="2">Perinuclear region</location>
    </subcellularLocation>
    <subcellularLocation>
        <location evidence="2">Cell projection</location>
        <location evidence="2">Lamellipodium</location>
    </subcellularLocation>
    <subcellularLocation>
        <location evidence="2">Cell projection</location>
        <location evidence="2">Ruffle</location>
    </subcellularLocation>
    <subcellularLocation>
        <location evidence="2">Synapse</location>
        <location evidence="2">Synaptosome</location>
    </subcellularLocation>
    <text evidence="2">Highly expressed in the perinuclear region (By similarity). Enriched in synaptosomes (By similarity). Also enriched in membrane ruffles and at the tips of lamellipodia (By similarity).</text>
</comment>
<comment type="similarity">
    <text evidence="3">Belongs to the CYFIP family.</text>
</comment>
<reference evidence="5" key="1">
    <citation type="journal article" date="2001" name="Proc. Natl. Acad. Sci. U.S.A.">
        <title>A highly conserved protein family interacting with the fragile X mental retardation protein (FMRP) and displaying selective interactions with FMRP-related proteins FXR1P and FXR2P.</title>
        <authorList>
            <person name="Schenck A."/>
            <person name="Bardoni B."/>
            <person name="Moro A."/>
            <person name="Bagni C."/>
            <person name="Mandel J.-L."/>
        </authorList>
    </citation>
    <scope>NUCLEOTIDE SEQUENCE [MRNA]</scope>
</reference>
<reference evidence="4 6" key="2">
    <citation type="submission" date="2005-03" db="EMBL/GenBank/DDBJ databases">
        <authorList>
            <consortium name="NIH - Zebrafish Gene Collection (ZGC) project"/>
        </authorList>
    </citation>
    <scope>NUCLEOTIDE SEQUENCE [LARGE SCALE MRNA] OF 1-510</scope>
    <source>
        <tissue evidence="6">Embryo</tissue>
    </source>
</reference>